<dbReference type="EMBL" id="BA000037">
    <property type="protein sequence ID" value="BAC93819.1"/>
    <property type="molecule type" value="Genomic_DNA"/>
</dbReference>
<dbReference type="RefSeq" id="WP_011078251.1">
    <property type="nucleotide sequence ID" value="NC_005139.1"/>
</dbReference>
<dbReference type="SMR" id="Q7MML2"/>
<dbReference type="STRING" id="672.VV93_v1c09780"/>
<dbReference type="KEGG" id="vvy:VV1055"/>
<dbReference type="eggNOG" id="COG0851">
    <property type="taxonomic scope" value="Bacteria"/>
</dbReference>
<dbReference type="HOGENOM" id="CLU_137929_2_2_6"/>
<dbReference type="Proteomes" id="UP000002675">
    <property type="component" value="Chromosome I"/>
</dbReference>
<dbReference type="GO" id="GO:0051301">
    <property type="term" value="P:cell division"/>
    <property type="evidence" value="ECO:0007669"/>
    <property type="project" value="UniProtKB-KW"/>
</dbReference>
<dbReference type="GO" id="GO:0032955">
    <property type="term" value="P:regulation of division septum assembly"/>
    <property type="evidence" value="ECO:0007669"/>
    <property type="project" value="InterPro"/>
</dbReference>
<dbReference type="FunFam" id="3.30.1070.10:FF:000001">
    <property type="entry name" value="Cell division topological specificity factor"/>
    <property type="match status" value="1"/>
</dbReference>
<dbReference type="Gene3D" id="3.30.1070.10">
    <property type="entry name" value="Cell division topological specificity factor MinE"/>
    <property type="match status" value="1"/>
</dbReference>
<dbReference type="HAMAP" id="MF_00262">
    <property type="entry name" value="MinE"/>
    <property type="match status" value="1"/>
</dbReference>
<dbReference type="InterPro" id="IPR005527">
    <property type="entry name" value="MinE"/>
</dbReference>
<dbReference type="InterPro" id="IPR036707">
    <property type="entry name" value="MinE_sf"/>
</dbReference>
<dbReference type="NCBIfam" id="TIGR01215">
    <property type="entry name" value="minE"/>
    <property type="match status" value="1"/>
</dbReference>
<dbReference type="NCBIfam" id="NF001422">
    <property type="entry name" value="PRK00296.1"/>
    <property type="match status" value="1"/>
</dbReference>
<dbReference type="Pfam" id="PF03776">
    <property type="entry name" value="MinE"/>
    <property type="match status" value="1"/>
</dbReference>
<dbReference type="SUPFAM" id="SSF55229">
    <property type="entry name" value="Cell division protein MinE topological specificity domain"/>
    <property type="match status" value="1"/>
</dbReference>
<name>MINE_VIBVY</name>
<keyword id="KW-0131">Cell cycle</keyword>
<keyword id="KW-0132">Cell division</keyword>
<evidence type="ECO:0000255" key="1">
    <source>
        <dbReference type="HAMAP-Rule" id="MF_00262"/>
    </source>
</evidence>
<accession>Q7MML2</accession>
<comment type="function">
    <text evidence="1">Prevents the cell division inhibition by proteins MinC and MinD at internal division sites while permitting inhibition at polar sites. This ensures cell division at the proper site by restricting the formation of a division septum at the midpoint of the long axis of the cell.</text>
</comment>
<comment type="similarity">
    <text evidence="1">Belongs to the MinE family.</text>
</comment>
<gene>
    <name evidence="1" type="primary">minE</name>
    <name type="ordered locus">VV1055</name>
</gene>
<sequence>MSLLEFFRPQKKTSASLAKERLQIIVAERRSQNDPAPSYLPQLKEDILKVISKYVAIDPAMVDLTFEHKDDDISVLELNVKLPDEEK</sequence>
<reference key="1">
    <citation type="journal article" date="2003" name="Genome Res.">
        <title>Comparative genome analysis of Vibrio vulnificus, a marine pathogen.</title>
        <authorList>
            <person name="Chen C.-Y."/>
            <person name="Wu K.-M."/>
            <person name="Chang Y.-C."/>
            <person name="Chang C.-H."/>
            <person name="Tsai H.-C."/>
            <person name="Liao T.-L."/>
            <person name="Liu Y.-M."/>
            <person name="Chen H.-J."/>
            <person name="Shen A.B.-T."/>
            <person name="Li J.-C."/>
            <person name="Su T.-L."/>
            <person name="Shao C.-P."/>
            <person name="Lee C.-T."/>
            <person name="Hor L.-I."/>
            <person name="Tsai S.-F."/>
        </authorList>
    </citation>
    <scope>NUCLEOTIDE SEQUENCE [LARGE SCALE GENOMIC DNA]</scope>
    <source>
        <strain>YJ016</strain>
    </source>
</reference>
<organism>
    <name type="scientific">Vibrio vulnificus (strain YJ016)</name>
    <dbReference type="NCBI Taxonomy" id="196600"/>
    <lineage>
        <taxon>Bacteria</taxon>
        <taxon>Pseudomonadati</taxon>
        <taxon>Pseudomonadota</taxon>
        <taxon>Gammaproteobacteria</taxon>
        <taxon>Vibrionales</taxon>
        <taxon>Vibrionaceae</taxon>
        <taxon>Vibrio</taxon>
    </lineage>
</organism>
<feature type="chain" id="PRO_0000205893" description="Cell division topological specificity factor">
    <location>
        <begin position="1"/>
        <end position="87"/>
    </location>
</feature>
<protein>
    <recommendedName>
        <fullName evidence="1">Cell division topological specificity factor</fullName>
    </recommendedName>
</protein>
<proteinExistence type="inferred from homology"/>